<gene>
    <name type="primary">egl2</name>
</gene>
<accession>P07982</accession>
<proteinExistence type="evidence at protein level"/>
<name>GUN2_HYPJE</name>
<organism>
    <name type="scientific">Hypocrea jecorina</name>
    <name type="common">Trichoderma reesei</name>
    <dbReference type="NCBI Taxonomy" id="51453"/>
    <lineage>
        <taxon>Eukaryota</taxon>
        <taxon>Fungi</taxon>
        <taxon>Dikarya</taxon>
        <taxon>Ascomycota</taxon>
        <taxon>Pezizomycotina</taxon>
        <taxon>Sordariomycetes</taxon>
        <taxon>Hypocreomycetidae</taxon>
        <taxon>Hypocreales</taxon>
        <taxon>Hypocreaceae</taxon>
        <taxon>Trichoderma</taxon>
    </lineage>
</organism>
<feature type="signal peptide" evidence="6">
    <location>
        <begin position="1"/>
        <end position="21"/>
    </location>
</feature>
<feature type="chain" id="PRO_0000007874" description="Endoglucanase EG-II">
    <location>
        <begin position="22"/>
        <end position="418"/>
    </location>
</feature>
<feature type="domain" description="CBM1" evidence="2">
    <location>
        <begin position="22"/>
        <end position="57"/>
    </location>
</feature>
<feature type="region of interest" description="Linker" evidence="8">
    <location>
        <begin position="58"/>
        <end position="91"/>
    </location>
</feature>
<feature type="region of interest" description="Disordered" evidence="3">
    <location>
        <begin position="63"/>
        <end position="91"/>
    </location>
</feature>
<feature type="region of interest" description="Catalytic" evidence="9">
    <location>
        <begin position="92"/>
        <end position="418"/>
    </location>
</feature>
<feature type="active site" description="Proton donor/acceptor" evidence="9 12">
    <location>
        <position position="239"/>
    </location>
</feature>
<feature type="active site" description="Nucleophile" evidence="7 9">
    <location>
        <position position="350"/>
    </location>
</feature>
<feature type="modified residue" description="Pyrrolidone carboxylic acid" evidence="6">
    <location>
        <position position="22"/>
    </location>
</feature>
<feature type="glycosylation site" description="N-linked (GlcNAc) asparagine" evidence="1">
    <location>
        <position position="124"/>
    </location>
</feature>
<feature type="disulfide bond" evidence="4 13">
    <location>
        <begin position="107"/>
        <end position="113"/>
    </location>
</feature>
<feature type="disulfide bond" evidence="4 13">
    <location>
        <begin position="183"/>
        <end position="190"/>
    </location>
</feature>
<feature type="disulfide bond" evidence="4 13">
    <location>
        <begin position="323"/>
        <end position="359"/>
    </location>
</feature>
<feature type="disulfide bond" evidence="4 13">
    <location>
        <begin position="364"/>
        <end position="414"/>
    </location>
</feature>
<feature type="strand" evidence="14">
    <location>
        <begin position="94"/>
        <end position="102"/>
    </location>
</feature>
<feature type="turn" evidence="14">
    <location>
        <begin position="103"/>
        <end position="106"/>
    </location>
</feature>
<feature type="helix" evidence="14">
    <location>
        <begin position="115"/>
        <end position="117"/>
    </location>
</feature>
<feature type="strand" evidence="14">
    <location>
        <begin position="125"/>
        <end position="129"/>
    </location>
</feature>
<feature type="helix" evidence="14">
    <location>
        <begin position="134"/>
        <end position="145"/>
    </location>
</feature>
<feature type="strand" evidence="14">
    <location>
        <begin position="149"/>
        <end position="154"/>
    </location>
</feature>
<feature type="helix" evidence="14">
    <location>
        <begin position="156"/>
        <end position="159"/>
    </location>
</feature>
<feature type="turn" evidence="14">
    <location>
        <begin position="160"/>
        <end position="162"/>
    </location>
</feature>
<feature type="helix" evidence="14">
    <location>
        <begin position="170"/>
        <end position="185"/>
    </location>
</feature>
<feature type="strand" evidence="14">
    <location>
        <begin position="189"/>
        <end position="194"/>
    </location>
</feature>
<feature type="turn" evidence="14">
    <location>
        <begin position="205"/>
        <end position="208"/>
    </location>
</feature>
<feature type="helix" evidence="14">
    <location>
        <begin position="212"/>
        <end position="226"/>
    </location>
</feature>
<feature type="strand" evidence="14">
    <location>
        <begin position="232"/>
        <end position="235"/>
    </location>
</feature>
<feature type="helix" evidence="14">
    <location>
        <begin position="245"/>
        <end position="261"/>
    </location>
</feature>
<feature type="strand" evidence="14">
    <location>
        <begin position="269"/>
        <end position="272"/>
    </location>
</feature>
<feature type="helix" evidence="14">
    <location>
        <begin position="275"/>
        <end position="277"/>
    </location>
</feature>
<feature type="turn" evidence="14">
    <location>
        <begin position="279"/>
        <end position="285"/>
    </location>
</feature>
<feature type="helix" evidence="14">
    <location>
        <begin position="287"/>
        <end position="291"/>
    </location>
</feature>
<feature type="strand" evidence="14">
    <location>
        <begin position="304"/>
        <end position="309"/>
    </location>
</feature>
<feature type="strand" evidence="14">
    <location>
        <begin position="316"/>
        <end position="318"/>
    </location>
</feature>
<feature type="strand" evidence="14">
    <location>
        <begin position="320"/>
        <end position="322"/>
    </location>
</feature>
<feature type="turn" evidence="14">
    <location>
        <begin position="328"/>
        <end position="331"/>
    </location>
</feature>
<feature type="helix" evidence="14">
    <location>
        <begin position="332"/>
        <end position="341"/>
    </location>
</feature>
<feature type="strand" evidence="14">
    <location>
        <begin position="346"/>
        <end position="351"/>
    </location>
</feature>
<feature type="helix" evidence="14">
    <location>
        <begin position="357"/>
        <end position="371"/>
    </location>
</feature>
<feature type="turn" evidence="14">
    <location>
        <begin position="372"/>
        <end position="376"/>
    </location>
</feature>
<feature type="strand" evidence="14">
    <location>
        <begin position="377"/>
        <end position="386"/>
    </location>
</feature>
<feature type="strand" evidence="14">
    <location>
        <begin position="399"/>
        <end position="403"/>
    </location>
</feature>
<feature type="helix" evidence="14">
    <location>
        <begin position="409"/>
        <end position="414"/>
    </location>
</feature>
<protein>
    <recommendedName>
        <fullName>Endoglucanase EG-II</fullName>
        <shortName>EGII</shortName>
        <ecNumber evidence="5 6">3.2.1.4</ecNumber>
    </recommendedName>
    <alternativeName>
        <fullName>Cellulase</fullName>
    </alternativeName>
    <alternativeName>
        <fullName>Endo-1,4-beta-glucanase</fullName>
    </alternativeName>
</protein>
<sequence>MNKSVAPLLLAASILYGGAVAQQTVWGQCGGIGWSGPTNCAPGSACSTLNPYYAQCIPGATTITTSTRPPSGPTTTTRATSTSSSTPPTSSGVRFAGVNIAGFDFGCTTDGTCVTSKVYPPLKNFTGSNNYPDGIGQMQHFVNEDGMTIFRLPVGWQYLVNNNLGGNLDSTSISKYDQLVQGCLSLGAYCIVDIHNYARWNGGIIGQGGPTNAQFTSLWSQLASKYASQSRVWFGIMNEPHDVNINTWAATVQEVVTAIRNAGATSQFISLPGNDWQSAGAFISDGSAAALSQVTNPDGSTTNLIFDVHKYLDSDNSGTHAECTTNNIDGAFSPLATWLRQNNRQAILTETGGGNVQSCIQDMCQQIQYLNQNSDVYLGYVGWGAGSFDSTYVLTETPTSSGNSWTDTSLVSSCLARK</sequence>
<comment type="function">
    <text evidence="6 8">Endoglucanase (EG) that cleaves the internal beta-1,4-glucosidic bonds in cellulose (PubMed:3384334). The degradation of cellulose involves an interplay between different cellulolytic enzymes. Hydrolysis starts with EGs, which cut internal glycosidic linkages to reduce the polymerization degree of the substrate and creates new chain ends for exocellobiohydrolases (CBHs). The CBH release the disaccharide cellobiose from the non-reducing end of the cellulose polymer chain. Finally, beta-1,4-glucosidases hydrolyze the cellobiose and other short cello-oligosaccharides into glucose units (Probable).</text>
</comment>
<comment type="catalytic activity">
    <reaction evidence="5 6">
        <text>Endohydrolysis of (1-&gt;4)-beta-D-glucosidic linkages in cellulose, lichenin and cereal beta-D-glucans.</text>
        <dbReference type="EC" id="3.2.1.4"/>
    </reaction>
</comment>
<comment type="subcellular location">
    <subcellularLocation>
        <location evidence="11">Secreted</location>
    </subcellularLocation>
</comment>
<comment type="domain">
    <text evidence="9 10">The enzyme consists of two functional domains, a catalytic core joined to a carbohydrate-binding domain (CBM) by a serine-, threonine-, and proline-rich, highly glycosylated linker sequence.</text>
</comment>
<comment type="similarity">
    <text evidence="8">Belongs to the glycosyl hydrolase 5 (cellulase A) family.</text>
</comment>
<comment type="caution">
    <text evidence="11">Was originally called endoglucanase EG-III.</text>
</comment>
<keyword id="KW-0002">3D-structure</keyword>
<keyword id="KW-0119">Carbohydrate metabolism</keyword>
<keyword id="KW-0136">Cellulose degradation</keyword>
<keyword id="KW-0903">Direct protein sequencing</keyword>
<keyword id="KW-1015">Disulfide bond</keyword>
<keyword id="KW-0325">Glycoprotein</keyword>
<keyword id="KW-0326">Glycosidase</keyword>
<keyword id="KW-0378">Hydrolase</keyword>
<keyword id="KW-0624">Polysaccharide degradation</keyword>
<keyword id="KW-0873">Pyrrolidone carboxylic acid</keyword>
<keyword id="KW-0964">Secreted</keyword>
<keyword id="KW-0732">Signal</keyword>
<dbReference type="EC" id="3.2.1.4" evidence="5 6"/>
<dbReference type="EMBL" id="M19373">
    <property type="protein sequence ID" value="AAA34213.1"/>
    <property type="molecule type" value="Genomic_DNA"/>
</dbReference>
<dbReference type="PIR" id="S28372">
    <property type="entry name" value="S28372"/>
</dbReference>
<dbReference type="PDB" id="3QR3">
    <property type="method" value="X-ray"/>
    <property type="resolution" value="2.05 A"/>
    <property type="chains" value="A/B=92-418"/>
</dbReference>
<dbReference type="PDBsum" id="3QR3"/>
<dbReference type="SMR" id="P07982"/>
<dbReference type="CAZy" id="CBM1">
    <property type="family name" value="Carbohydrate-Binding Module Family 1"/>
</dbReference>
<dbReference type="CAZy" id="GH5">
    <property type="family name" value="Glycoside Hydrolase Family 5"/>
</dbReference>
<dbReference type="GlyCosmos" id="P07982">
    <property type="glycosylation" value="1 site, No reported glycans"/>
</dbReference>
<dbReference type="BioCyc" id="MetaCyc:MONOMER-16502"/>
<dbReference type="EvolutionaryTrace" id="P07982"/>
<dbReference type="GO" id="GO:0005576">
    <property type="term" value="C:extracellular region"/>
    <property type="evidence" value="ECO:0007669"/>
    <property type="project" value="UniProtKB-SubCell"/>
</dbReference>
<dbReference type="GO" id="GO:0008810">
    <property type="term" value="F:cellulase activity"/>
    <property type="evidence" value="ECO:0007669"/>
    <property type="project" value="UniProtKB-EC"/>
</dbReference>
<dbReference type="GO" id="GO:0030248">
    <property type="term" value="F:cellulose binding"/>
    <property type="evidence" value="ECO:0007669"/>
    <property type="project" value="InterPro"/>
</dbReference>
<dbReference type="GO" id="GO:0030245">
    <property type="term" value="P:cellulose catabolic process"/>
    <property type="evidence" value="ECO:0007669"/>
    <property type="project" value="UniProtKB-KW"/>
</dbReference>
<dbReference type="FunFam" id="3.20.20.80:FF:000124">
    <property type="entry name" value="Exported cellulase"/>
    <property type="match status" value="1"/>
</dbReference>
<dbReference type="Gene3D" id="3.20.20.80">
    <property type="entry name" value="Glycosidases"/>
    <property type="match status" value="1"/>
</dbReference>
<dbReference type="InterPro" id="IPR035971">
    <property type="entry name" value="CBD_sf"/>
</dbReference>
<dbReference type="InterPro" id="IPR000254">
    <property type="entry name" value="Cellulose-bd_dom_fun"/>
</dbReference>
<dbReference type="InterPro" id="IPR001547">
    <property type="entry name" value="Glyco_hydro_5"/>
</dbReference>
<dbReference type="InterPro" id="IPR018087">
    <property type="entry name" value="Glyco_hydro_5_CS"/>
</dbReference>
<dbReference type="InterPro" id="IPR017853">
    <property type="entry name" value="Glycoside_hydrolase_SF"/>
</dbReference>
<dbReference type="PANTHER" id="PTHR34142:SF5">
    <property type="entry name" value="CBM1 DOMAIN-CONTAINING PROTEIN"/>
    <property type="match status" value="1"/>
</dbReference>
<dbReference type="PANTHER" id="PTHR34142">
    <property type="entry name" value="ENDO-BETA-1,4-GLUCANASE A"/>
    <property type="match status" value="1"/>
</dbReference>
<dbReference type="Pfam" id="PF00734">
    <property type="entry name" value="CBM_1"/>
    <property type="match status" value="1"/>
</dbReference>
<dbReference type="Pfam" id="PF00150">
    <property type="entry name" value="Cellulase"/>
    <property type="match status" value="1"/>
</dbReference>
<dbReference type="SMART" id="SM00236">
    <property type="entry name" value="fCBD"/>
    <property type="match status" value="1"/>
</dbReference>
<dbReference type="SUPFAM" id="SSF51445">
    <property type="entry name" value="(Trans)glycosidases"/>
    <property type="match status" value="1"/>
</dbReference>
<dbReference type="SUPFAM" id="SSF57180">
    <property type="entry name" value="Cellulose-binding domain"/>
    <property type="match status" value="1"/>
</dbReference>
<dbReference type="PROSITE" id="PS00562">
    <property type="entry name" value="CBM1_1"/>
    <property type="match status" value="1"/>
</dbReference>
<dbReference type="PROSITE" id="PS51164">
    <property type="entry name" value="CBM1_2"/>
    <property type="match status" value="1"/>
</dbReference>
<dbReference type="PROSITE" id="PS00659">
    <property type="entry name" value="GLYCOSYL_HYDROL_F5"/>
    <property type="match status" value="1"/>
</dbReference>
<reference key="1">
    <citation type="journal article" date="1988" name="Gene">
        <title>EGIII, a new endoglucanase from Trichoderma reesei: the characterization of both gene and enzyme.</title>
        <authorList>
            <person name="Saloheimo M."/>
            <person name="Lehtovaara P."/>
            <person name="Penttilae M."/>
            <person name="Teeri T.T."/>
            <person name="Staahlberg J."/>
            <person name="Johansson G."/>
            <person name="Pettersson G."/>
            <person name="Clayssens M."/>
            <person name="Tomme P."/>
            <person name="Knowles J.K.C."/>
        </authorList>
    </citation>
    <scope>NUCLEOTIDE SEQUENCE [GENOMIC DNA]</scope>
    <scope>PROTEIN SEQUENCE OF 22-58</scope>
    <scope>FUNCTION</scope>
    <scope>CATALYTIC ACTIVITY</scope>
    <scope>PYROGLUTAMATE FORMATION AT GLN-22</scope>
    <source>
        <strain>VTT-D-80133</strain>
    </source>
</reference>
<reference key="2">
    <citation type="journal article" date="1988" name="Eur. J. Biochem.">
        <title>A binding-site-deficient, catalytically active, core protein of endoglucanase III from the culture filtrate of Trichoderma reesei.</title>
        <authorList>
            <person name="Stahlberg J."/>
            <person name="Johansson G."/>
            <person name="Pettersson G."/>
        </authorList>
    </citation>
    <scope>PROTEIN SEQUENCE OF 87-99</scope>
    <scope>CATALYTIC ACTIVITY</scope>
    <scope>DOMAIN</scope>
    <source>
        <strain>ATCC 26921 / CBS 392.92 / QM9414</strain>
    </source>
</reference>
<reference key="3">
    <citation type="journal article" date="1993" name="FEBS Lett.">
        <title>Identification of an essential glutamate residue in the active site of endoglucanase III from Trichoderma reesei.</title>
        <authorList>
            <person name="Macarron R."/>
            <person name="van Beeumen J."/>
            <person name="Henrissat B."/>
            <person name="de la Mata I."/>
            <person name="Claeyssens M."/>
        </authorList>
    </citation>
    <scope>ACTIVE SITE GLU-350</scope>
    <source>
        <strain>ATCC 26921 / CBS 392.92 / QM9414</strain>
    </source>
</reference>
<reference key="4">
    <citation type="journal article" date="2011" name="Protein Sci.">
        <title>A structural study of Hypocrea jecorina Cel5A.</title>
        <authorList>
            <person name="Lee T.M."/>
            <person name="Farrow M.F."/>
            <person name="Arnold F.H."/>
            <person name="Mayo S.L."/>
        </authorList>
    </citation>
    <scope>X-RAY CRYSTALLOGRAPHY (2.05 ANGSTROMS) OF 92-418</scope>
    <scope>ACTIVE SITE</scope>
    <scope>DISULFIDE BONDS</scope>
</reference>
<evidence type="ECO:0000250" key="1">
    <source>
        <dbReference type="UniProtKB" id="A0A024SH20"/>
    </source>
</evidence>
<evidence type="ECO:0000255" key="2">
    <source>
        <dbReference type="PROSITE-ProRule" id="PRU00597"/>
    </source>
</evidence>
<evidence type="ECO:0000256" key="3">
    <source>
        <dbReference type="SAM" id="MobiDB-lite"/>
    </source>
</evidence>
<evidence type="ECO:0000269" key="4">
    <source>
    </source>
</evidence>
<evidence type="ECO:0000269" key="5">
    <source>
    </source>
</evidence>
<evidence type="ECO:0000269" key="6">
    <source>
    </source>
</evidence>
<evidence type="ECO:0000269" key="7">
    <source>
    </source>
</evidence>
<evidence type="ECO:0000305" key="8"/>
<evidence type="ECO:0000305" key="9">
    <source>
    </source>
</evidence>
<evidence type="ECO:0000305" key="10">
    <source>
    </source>
</evidence>
<evidence type="ECO:0000305" key="11">
    <source>
    </source>
</evidence>
<evidence type="ECO:0000305" key="12">
    <source>
    </source>
</evidence>
<evidence type="ECO:0007744" key="13">
    <source>
        <dbReference type="PDB" id="3QR3"/>
    </source>
</evidence>
<evidence type="ECO:0007829" key="14">
    <source>
        <dbReference type="PDB" id="3QR3"/>
    </source>
</evidence>